<gene>
    <name evidence="1" type="primary">yidD</name>
    <name type="ordered locus">SSPA3440</name>
</gene>
<comment type="function">
    <text evidence="1">Could be involved in insertion of integral membrane proteins into the membrane.</text>
</comment>
<comment type="subcellular location">
    <subcellularLocation>
        <location evidence="1">Cell inner membrane</location>
        <topology evidence="1">Peripheral membrane protein</topology>
        <orientation evidence="1">Cytoplasmic side</orientation>
    </subcellularLocation>
</comment>
<comment type="similarity">
    <text evidence="1">Belongs to the UPF0161 family.</text>
</comment>
<name>YIDD_SALPK</name>
<organism>
    <name type="scientific">Salmonella paratyphi A (strain AKU_12601)</name>
    <dbReference type="NCBI Taxonomy" id="554290"/>
    <lineage>
        <taxon>Bacteria</taxon>
        <taxon>Pseudomonadati</taxon>
        <taxon>Pseudomonadota</taxon>
        <taxon>Gammaproteobacteria</taxon>
        <taxon>Enterobacterales</taxon>
        <taxon>Enterobacteriaceae</taxon>
        <taxon>Salmonella</taxon>
    </lineage>
</organism>
<protein>
    <recommendedName>
        <fullName evidence="1">Putative membrane protein insertion efficiency factor</fullName>
    </recommendedName>
</protein>
<sequence length="85" mass="9381">MAPPLSPGSRVLIALIRVYQRLISPLLGPHCRFTPTCSSYGIEALRRFGVIKGSWLTVKRVLKCHPLHPGGDDPVPPGPFDTREH</sequence>
<evidence type="ECO:0000255" key="1">
    <source>
        <dbReference type="HAMAP-Rule" id="MF_00386"/>
    </source>
</evidence>
<accession>B5BIL7</accession>
<dbReference type="EMBL" id="FM200053">
    <property type="protein sequence ID" value="CAR61715.1"/>
    <property type="molecule type" value="Genomic_DNA"/>
</dbReference>
<dbReference type="RefSeq" id="WP_001307474.1">
    <property type="nucleotide sequence ID" value="NC_011147.1"/>
</dbReference>
<dbReference type="GeneID" id="97443257"/>
<dbReference type="KEGG" id="sek:SSPA3440"/>
<dbReference type="HOGENOM" id="CLU_144811_5_2_6"/>
<dbReference type="Proteomes" id="UP000001869">
    <property type="component" value="Chromosome"/>
</dbReference>
<dbReference type="GO" id="GO:0005886">
    <property type="term" value="C:plasma membrane"/>
    <property type="evidence" value="ECO:0007669"/>
    <property type="project" value="UniProtKB-SubCell"/>
</dbReference>
<dbReference type="HAMAP" id="MF_00386">
    <property type="entry name" value="UPF0161_YidD"/>
    <property type="match status" value="1"/>
</dbReference>
<dbReference type="InterPro" id="IPR002696">
    <property type="entry name" value="Membr_insert_effic_factor_YidD"/>
</dbReference>
<dbReference type="NCBIfam" id="TIGR00278">
    <property type="entry name" value="membrane protein insertion efficiency factor YidD"/>
    <property type="match status" value="1"/>
</dbReference>
<dbReference type="PANTHER" id="PTHR33383">
    <property type="entry name" value="MEMBRANE PROTEIN INSERTION EFFICIENCY FACTOR-RELATED"/>
    <property type="match status" value="1"/>
</dbReference>
<dbReference type="PANTHER" id="PTHR33383:SF1">
    <property type="entry name" value="MEMBRANE PROTEIN INSERTION EFFICIENCY FACTOR-RELATED"/>
    <property type="match status" value="1"/>
</dbReference>
<dbReference type="Pfam" id="PF01809">
    <property type="entry name" value="YidD"/>
    <property type="match status" value="1"/>
</dbReference>
<dbReference type="SMART" id="SM01234">
    <property type="entry name" value="Haemolytic"/>
    <property type="match status" value="1"/>
</dbReference>
<reference key="1">
    <citation type="journal article" date="2009" name="BMC Genomics">
        <title>Pseudogene accumulation in the evolutionary histories of Salmonella enterica serovars Paratyphi A and Typhi.</title>
        <authorList>
            <person name="Holt K.E."/>
            <person name="Thomson N.R."/>
            <person name="Wain J."/>
            <person name="Langridge G.C."/>
            <person name="Hasan R."/>
            <person name="Bhutta Z.A."/>
            <person name="Quail M.A."/>
            <person name="Norbertczak H."/>
            <person name="Walker D."/>
            <person name="Simmonds M."/>
            <person name="White B."/>
            <person name="Bason N."/>
            <person name="Mungall K."/>
            <person name="Dougan G."/>
            <person name="Parkhill J."/>
        </authorList>
    </citation>
    <scope>NUCLEOTIDE SEQUENCE [LARGE SCALE GENOMIC DNA]</scope>
    <source>
        <strain>AKU_12601</strain>
    </source>
</reference>
<keyword id="KW-0997">Cell inner membrane</keyword>
<keyword id="KW-1003">Cell membrane</keyword>
<keyword id="KW-0472">Membrane</keyword>
<feature type="chain" id="PRO_1000197778" description="Putative membrane protein insertion efficiency factor">
    <location>
        <begin position="1"/>
        <end position="85"/>
    </location>
</feature>
<proteinExistence type="inferred from homology"/>